<comment type="function">
    <text evidence="1">Specifically dimethylates two adjacent adenosines (A1518 and A1519) in the loop of a conserved hairpin near the 3'-end of 16S rRNA in the 30S particle. May play a critical role in biogenesis of 30S subunits.</text>
</comment>
<comment type="catalytic activity">
    <reaction evidence="1">
        <text>adenosine(1518)/adenosine(1519) in 16S rRNA + 4 S-adenosyl-L-methionine = N(6)-dimethyladenosine(1518)/N(6)-dimethyladenosine(1519) in 16S rRNA + 4 S-adenosyl-L-homocysteine + 4 H(+)</text>
        <dbReference type="Rhea" id="RHEA:19609"/>
        <dbReference type="Rhea" id="RHEA-COMP:10232"/>
        <dbReference type="Rhea" id="RHEA-COMP:10233"/>
        <dbReference type="ChEBI" id="CHEBI:15378"/>
        <dbReference type="ChEBI" id="CHEBI:57856"/>
        <dbReference type="ChEBI" id="CHEBI:59789"/>
        <dbReference type="ChEBI" id="CHEBI:74411"/>
        <dbReference type="ChEBI" id="CHEBI:74493"/>
        <dbReference type="EC" id="2.1.1.182"/>
    </reaction>
</comment>
<comment type="subcellular location">
    <subcellularLocation>
        <location evidence="1">Cytoplasm</location>
    </subcellularLocation>
</comment>
<comment type="similarity">
    <text evidence="1">Belongs to the class I-like SAM-binding methyltransferase superfamily. rRNA adenine N(6)-methyltransferase family. RsmA subfamily.</text>
</comment>
<feature type="chain" id="PRO_1000130237" description="Ribosomal RNA small subunit methyltransferase A">
    <location>
        <begin position="1"/>
        <end position="289"/>
    </location>
</feature>
<feature type="binding site" evidence="1">
    <location>
        <position position="21"/>
    </location>
    <ligand>
        <name>S-adenosyl-L-methionine</name>
        <dbReference type="ChEBI" id="CHEBI:59789"/>
    </ligand>
</feature>
<feature type="binding site" evidence="1">
    <location>
        <position position="23"/>
    </location>
    <ligand>
        <name>S-adenosyl-L-methionine</name>
        <dbReference type="ChEBI" id="CHEBI:59789"/>
    </ligand>
</feature>
<feature type="binding site" evidence="1">
    <location>
        <position position="48"/>
    </location>
    <ligand>
        <name>S-adenosyl-L-methionine</name>
        <dbReference type="ChEBI" id="CHEBI:59789"/>
    </ligand>
</feature>
<feature type="binding site" evidence="1">
    <location>
        <position position="69"/>
    </location>
    <ligand>
        <name>S-adenosyl-L-methionine</name>
        <dbReference type="ChEBI" id="CHEBI:59789"/>
    </ligand>
</feature>
<feature type="binding site" evidence="1">
    <location>
        <position position="94"/>
    </location>
    <ligand>
        <name>S-adenosyl-L-methionine</name>
        <dbReference type="ChEBI" id="CHEBI:59789"/>
    </ligand>
</feature>
<feature type="binding site" evidence="1">
    <location>
        <position position="120"/>
    </location>
    <ligand>
        <name>S-adenosyl-L-methionine</name>
        <dbReference type="ChEBI" id="CHEBI:59789"/>
    </ligand>
</feature>
<sequence length="289" mass="33246">MSNQNSKKHLGHTARKRFGQNFLHDMNVIHNIVSAINPKNGQFLFEIGPGLGALTEPVAEQVDKLTVVELDRDLAERLRHHPFLNHKLTIIEQDALRFNFREYFESLELKEGEGVRVFGNLPYNISTPLMFHLFKFHDLIQDMHFMLQKEVVKRLCAAPNSKAYGRLTIMAQYYCQVVPVLEVPPTAFKPAPKVDSAVVRLMPHKVLPHPVKDVYWLNRVTTQAFNQRRKTLRNALSTLFSPEQLEALNIDLNARAENLSIADYARLANWLYDNPPAVDNQEEIIDEDI</sequence>
<accession>B0BTQ4</accession>
<evidence type="ECO:0000255" key="1">
    <source>
        <dbReference type="HAMAP-Rule" id="MF_00607"/>
    </source>
</evidence>
<name>RSMA_ACTPJ</name>
<organism>
    <name type="scientific">Actinobacillus pleuropneumoniae serotype 3 (strain JL03)</name>
    <dbReference type="NCBI Taxonomy" id="434271"/>
    <lineage>
        <taxon>Bacteria</taxon>
        <taxon>Pseudomonadati</taxon>
        <taxon>Pseudomonadota</taxon>
        <taxon>Gammaproteobacteria</taxon>
        <taxon>Pasteurellales</taxon>
        <taxon>Pasteurellaceae</taxon>
        <taxon>Actinobacillus</taxon>
    </lineage>
</organism>
<reference key="1">
    <citation type="journal article" date="2008" name="PLoS ONE">
        <title>Genome biology of Actinobacillus pleuropneumoniae JL03, an isolate of serotype 3 prevalent in China.</title>
        <authorList>
            <person name="Xu Z."/>
            <person name="Zhou Y."/>
            <person name="Li L."/>
            <person name="Zhou R."/>
            <person name="Xiao S."/>
            <person name="Wan Y."/>
            <person name="Zhang S."/>
            <person name="Wang K."/>
            <person name="Li W."/>
            <person name="Li L."/>
            <person name="Jin H."/>
            <person name="Kang M."/>
            <person name="Dalai B."/>
            <person name="Li T."/>
            <person name="Liu L."/>
            <person name="Cheng Y."/>
            <person name="Zhang L."/>
            <person name="Xu T."/>
            <person name="Zheng H."/>
            <person name="Pu S."/>
            <person name="Wang B."/>
            <person name="Gu W."/>
            <person name="Zhang X.L."/>
            <person name="Zhu G.-F."/>
            <person name="Wang S."/>
            <person name="Zhao G.-P."/>
            <person name="Chen H."/>
        </authorList>
    </citation>
    <scope>NUCLEOTIDE SEQUENCE [LARGE SCALE GENOMIC DNA]</scope>
    <source>
        <strain>JL03</strain>
    </source>
</reference>
<dbReference type="EC" id="2.1.1.182" evidence="1"/>
<dbReference type="EMBL" id="CP000687">
    <property type="protein sequence ID" value="ABY69009.1"/>
    <property type="molecule type" value="Genomic_DNA"/>
</dbReference>
<dbReference type="RefSeq" id="WP_012262806.1">
    <property type="nucleotide sequence ID" value="NC_010278.1"/>
</dbReference>
<dbReference type="SMR" id="B0BTQ4"/>
<dbReference type="KEGG" id="apj:APJL_0420"/>
<dbReference type="HOGENOM" id="CLU_041220_0_1_6"/>
<dbReference type="Proteomes" id="UP000008547">
    <property type="component" value="Chromosome"/>
</dbReference>
<dbReference type="GO" id="GO:0005829">
    <property type="term" value="C:cytosol"/>
    <property type="evidence" value="ECO:0007669"/>
    <property type="project" value="TreeGrafter"/>
</dbReference>
<dbReference type="GO" id="GO:0052908">
    <property type="term" value="F:16S rRNA (adenine(1518)-N(6)/adenine(1519)-N(6))-dimethyltransferase activity"/>
    <property type="evidence" value="ECO:0007669"/>
    <property type="project" value="UniProtKB-EC"/>
</dbReference>
<dbReference type="GO" id="GO:0003723">
    <property type="term" value="F:RNA binding"/>
    <property type="evidence" value="ECO:0007669"/>
    <property type="project" value="UniProtKB-KW"/>
</dbReference>
<dbReference type="FunFam" id="1.10.8.100:FF:000001">
    <property type="entry name" value="Ribosomal RNA small subunit methyltransferase A"/>
    <property type="match status" value="1"/>
</dbReference>
<dbReference type="FunFam" id="3.40.50.150:FF:000006">
    <property type="entry name" value="Ribosomal RNA small subunit methyltransferase A"/>
    <property type="match status" value="1"/>
</dbReference>
<dbReference type="Gene3D" id="1.10.8.100">
    <property type="entry name" value="Ribosomal RNA adenine dimethylase-like, domain 2"/>
    <property type="match status" value="1"/>
</dbReference>
<dbReference type="Gene3D" id="3.40.50.150">
    <property type="entry name" value="Vaccinia Virus protein VP39"/>
    <property type="match status" value="1"/>
</dbReference>
<dbReference type="HAMAP" id="MF_00607">
    <property type="entry name" value="16SrRNA_methyltr_A"/>
    <property type="match status" value="1"/>
</dbReference>
<dbReference type="InterPro" id="IPR001737">
    <property type="entry name" value="KsgA/Erm"/>
</dbReference>
<dbReference type="InterPro" id="IPR023165">
    <property type="entry name" value="rRNA_Ade_diMease-like_C"/>
</dbReference>
<dbReference type="InterPro" id="IPR020596">
    <property type="entry name" value="rRNA_Ade_Mease_Trfase_CS"/>
</dbReference>
<dbReference type="InterPro" id="IPR020598">
    <property type="entry name" value="rRNA_Ade_methylase_Trfase_N"/>
</dbReference>
<dbReference type="InterPro" id="IPR011530">
    <property type="entry name" value="rRNA_adenine_dimethylase"/>
</dbReference>
<dbReference type="InterPro" id="IPR029063">
    <property type="entry name" value="SAM-dependent_MTases_sf"/>
</dbReference>
<dbReference type="NCBIfam" id="TIGR00755">
    <property type="entry name" value="ksgA"/>
    <property type="match status" value="1"/>
</dbReference>
<dbReference type="PANTHER" id="PTHR11727">
    <property type="entry name" value="DIMETHYLADENOSINE TRANSFERASE"/>
    <property type="match status" value="1"/>
</dbReference>
<dbReference type="PANTHER" id="PTHR11727:SF7">
    <property type="entry name" value="DIMETHYLADENOSINE TRANSFERASE-RELATED"/>
    <property type="match status" value="1"/>
</dbReference>
<dbReference type="Pfam" id="PF00398">
    <property type="entry name" value="RrnaAD"/>
    <property type="match status" value="1"/>
</dbReference>
<dbReference type="SMART" id="SM00650">
    <property type="entry name" value="rADc"/>
    <property type="match status" value="1"/>
</dbReference>
<dbReference type="SUPFAM" id="SSF53335">
    <property type="entry name" value="S-adenosyl-L-methionine-dependent methyltransferases"/>
    <property type="match status" value="1"/>
</dbReference>
<dbReference type="PROSITE" id="PS01131">
    <property type="entry name" value="RRNA_A_DIMETH"/>
    <property type="match status" value="1"/>
</dbReference>
<dbReference type="PROSITE" id="PS51689">
    <property type="entry name" value="SAM_RNA_A_N6_MT"/>
    <property type="match status" value="1"/>
</dbReference>
<proteinExistence type="inferred from homology"/>
<gene>
    <name evidence="1" type="primary">rsmA</name>
    <name evidence="1" type="synonym">ksgA</name>
    <name type="ordered locus">APJL_0420</name>
</gene>
<keyword id="KW-0963">Cytoplasm</keyword>
<keyword id="KW-0489">Methyltransferase</keyword>
<keyword id="KW-0694">RNA-binding</keyword>
<keyword id="KW-0698">rRNA processing</keyword>
<keyword id="KW-0949">S-adenosyl-L-methionine</keyword>
<keyword id="KW-0808">Transferase</keyword>
<protein>
    <recommendedName>
        <fullName evidence="1">Ribosomal RNA small subunit methyltransferase A</fullName>
        <ecNumber evidence="1">2.1.1.182</ecNumber>
    </recommendedName>
    <alternativeName>
        <fullName evidence="1">16S rRNA (adenine(1518)-N(6)/adenine(1519)-N(6))-dimethyltransferase</fullName>
    </alternativeName>
    <alternativeName>
        <fullName evidence="1">16S rRNA dimethyladenosine transferase</fullName>
    </alternativeName>
    <alternativeName>
        <fullName evidence="1">16S rRNA dimethylase</fullName>
    </alternativeName>
    <alternativeName>
        <fullName evidence="1">S-adenosylmethionine-6-N', N'-adenosyl(rRNA) dimethyltransferase</fullName>
    </alternativeName>
</protein>